<name>14333_ARATH</name>
<accession>P42644</accession>
<accession>F4KBI7</accession>
<accession>Q945L2</accession>
<dbReference type="EMBL" id="L09110">
    <property type="protein sequence ID" value="AAA32799.1"/>
    <property type="molecule type" value="mRNA"/>
</dbReference>
<dbReference type="EMBL" id="X74140">
    <property type="protein sequence ID" value="CAA52237.1"/>
    <property type="molecule type" value="mRNA"/>
</dbReference>
<dbReference type="EMBL" id="U09375">
    <property type="protein sequence ID" value="AAA96252.1"/>
    <property type="molecule type" value="Genomic_DNA"/>
</dbReference>
<dbReference type="EMBL" id="AB005231">
    <property type="protein sequence ID" value="BAB10138.1"/>
    <property type="molecule type" value="Genomic_DNA"/>
</dbReference>
<dbReference type="EMBL" id="AB005248">
    <property type="protein sequence ID" value="BAB10138.1"/>
    <property type="status" value="JOINED"/>
    <property type="molecule type" value="Genomic_DNA"/>
</dbReference>
<dbReference type="EMBL" id="CP002688">
    <property type="protein sequence ID" value="AED94323.1"/>
    <property type="molecule type" value="Genomic_DNA"/>
</dbReference>
<dbReference type="EMBL" id="CP002688">
    <property type="protein sequence ID" value="AED94324.1"/>
    <property type="molecule type" value="Genomic_DNA"/>
</dbReference>
<dbReference type="EMBL" id="CP002688">
    <property type="protein sequence ID" value="ANM71068.1"/>
    <property type="molecule type" value="Genomic_DNA"/>
</dbReference>
<dbReference type="EMBL" id="AF412093">
    <property type="protein sequence ID" value="AAL06546.1"/>
    <property type="molecule type" value="mRNA"/>
</dbReference>
<dbReference type="EMBL" id="AY093976">
    <property type="protein sequence ID" value="AAM16237.1"/>
    <property type="molecule type" value="mRNA"/>
</dbReference>
<dbReference type="EMBL" id="AK226217">
    <property type="protein sequence ID" value="BAE98382.1"/>
    <property type="molecule type" value="mRNA"/>
</dbReference>
<dbReference type="EMBL" id="AK228478">
    <property type="protein sequence ID" value="BAF00404.1"/>
    <property type="molecule type" value="mRNA"/>
</dbReference>
<dbReference type="PIR" id="S47969">
    <property type="entry name" value="S47969"/>
</dbReference>
<dbReference type="PIR" id="S57277">
    <property type="entry name" value="S57277"/>
</dbReference>
<dbReference type="RefSeq" id="NP_001318697.1">
    <molecule id="P42644-2"/>
    <property type="nucleotide sequence ID" value="NM_001344251.1"/>
</dbReference>
<dbReference type="RefSeq" id="NP_001332624.1">
    <molecule id="P42644-2"/>
    <property type="nucleotide sequence ID" value="NM_001344252.1"/>
</dbReference>
<dbReference type="RefSeq" id="NP_568557.1">
    <molecule id="P42644-1"/>
    <property type="nucleotide sequence ID" value="NM_123209.4"/>
</dbReference>
<dbReference type="SMR" id="P42644"/>
<dbReference type="BioGRID" id="19087">
    <property type="interactions" value="275"/>
</dbReference>
<dbReference type="FunCoup" id="P42644">
    <property type="interactions" value="3321"/>
</dbReference>
<dbReference type="IntAct" id="P42644">
    <property type="interactions" value="9"/>
</dbReference>
<dbReference type="STRING" id="3702.P42644"/>
<dbReference type="iPTMnet" id="P42644"/>
<dbReference type="PaxDb" id="3702-AT5G38480.1"/>
<dbReference type="ProteomicsDB" id="243289">
    <molecule id="P42644-1"/>
</dbReference>
<dbReference type="EnsemblPlants" id="AT5G38480.1">
    <molecule id="P42644-1"/>
    <property type="protein sequence ID" value="AT5G38480.1"/>
    <property type="gene ID" value="AT5G38480"/>
</dbReference>
<dbReference type="EnsemblPlants" id="AT5G38480.2">
    <molecule id="P42644-2"/>
    <property type="protein sequence ID" value="AT5G38480.2"/>
    <property type="gene ID" value="AT5G38480"/>
</dbReference>
<dbReference type="EnsemblPlants" id="AT5G38480.3">
    <molecule id="P42644-2"/>
    <property type="protein sequence ID" value="AT5G38480.3"/>
    <property type="gene ID" value="AT5G38480"/>
</dbReference>
<dbReference type="GeneID" id="833836"/>
<dbReference type="Gramene" id="AT5G38480.1">
    <molecule id="P42644-1"/>
    <property type="protein sequence ID" value="AT5G38480.1"/>
    <property type="gene ID" value="AT5G38480"/>
</dbReference>
<dbReference type="Gramene" id="AT5G38480.2">
    <molecule id="P42644-2"/>
    <property type="protein sequence ID" value="AT5G38480.2"/>
    <property type="gene ID" value="AT5G38480"/>
</dbReference>
<dbReference type="Gramene" id="AT5G38480.3">
    <molecule id="P42644-2"/>
    <property type="protein sequence ID" value="AT5G38480.3"/>
    <property type="gene ID" value="AT5G38480"/>
</dbReference>
<dbReference type="KEGG" id="ath:AT5G38480"/>
<dbReference type="Araport" id="AT5G38480"/>
<dbReference type="TAIR" id="AT5G38480">
    <property type="gene designation" value="GRF3"/>
</dbReference>
<dbReference type="eggNOG" id="KOG0841">
    <property type="taxonomic scope" value="Eukaryota"/>
</dbReference>
<dbReference type="HOGENOM" id="CLU_058290_0_0_1"/>
<dbReference type="InParanoid" id="P42644"/>
<dbReference type="OMA" id="GDMQPTH"/>
<dbReference type="PhylomeDB" id="P42644"/>
<dbReference type="CD-CODE" id="4299E36E">
    <property type="entry name" value="Nucleolus"/>
</dbReference>
<dbReference type="PRO" id="PR:P42644"/>
<dbReference type="Proteomes" id="UP000006548">
    <property type="component" value="Chromosome 5"/>
</dbReference>
<dbReference type="ExpressionAtlas" id="P42644">
    <property type="expression patterns" value="baseline and differential"/>
</dbReference>
<dbReference type="GO" id="GO:0009507">
    <property type="term" value="C:chloroplast"/>
    <property type="evidence" value="ECO:0007005"/>
    <property type="project" value="TAIR"/>
</dbReference>
<dbReference type="GO" id="GO:0005737">
    <property type="term" value="C:cytoplasm"/>
    <property type="evidence" value="ECO:0000314"/>
    <property type="project" value="UniProtKB"/>
</dbReference>
<dbReference type="GO" id="GO:0005829">
    <property type="term" value="C:cytosol"/>
    <property type="evidence" value="ECO:0007005"/>
    <property type="project" value="TAIR"/>
</dbReference>
<dbReference type="GO" id="GO:0005794">
    <property type="term" value="C:Golgi apparatus"/>
    <property type="evidence" value="ECO:0007005"/>
    <property type="project" value="TAIR"/>
</dbReference>
<dbReference type="GO" id="GO:0005739">
    <property type="term" value="C:mitochondrion"/>
    <property type="evidence" value="ECO:0007005"/>
    <property type="project" value="TAIR"/>
</dbReference>
<dbReference type="GO" id="GO:0005634">
    <property type="term" value="C:nucleus"/>
    <property type="evidence" value="ECO:0000314"/>
    <property type="project" value="UniProtKB"/>
</dbReference>
<dbReference type="GO" id="GO:0009505">
    <property type="term" value="C:plant-type cell wall"/>
    <property type="evidence" value="ECO:0007005"/>
    <property type="project" value="TAIR"/>
</dbReference>
<dbReference type="GO" id="GO:0000325">
    <property type="term" value="C:plant-type vacuole"/>
    <property type="evidence" value="ECO:0007005"/>
    <property type="project" value="TAIR"/>
</dbReference>
<dbReference type="GO" id="GO:0005886">
    <property type="term" value="C:plasma membrane"/>
    <property type="evidence" value="ECO:0007005"/>
    <property type="project" value="TAIR"/>
</dbReference>
<dbReference type="GO" id="GO:0009506">
    <property type="term" value="C:plasmodesma"/>
    <property type="evidence" value="ECO:0007005"/>
    <property type="project" value="TAIR"/>
</dbReference>
<dbReference type="GO" id="GO:0009536">
    <property type="term" value="C:plastid"/>
    <property type="evidence" value="ECO:0007005"/>
    <property type="project" value="TAIR"/>
</dbReference>
<dbReference type="GO" id="GO:0005524">
    <property type="term" value="F:ATP binding"/>
    <property type="evidence" value="ECO:0007005"/>
    <property type="project" value="TAIR"/>
</dbReference>
<dbReference type="GO" id="GO:0006995">
    <property type="term" value="P:cellular response to nitrogen starvation"/>
    <property type="evidence" value="ECO:0000270"/>
    <property type="project" value="UniProtKB"/>
</dbReference>
<dbReference type="GO" id="GO:0016036">
    <property type="term" value="P:cellular response to phosphate starvation"/>
    <property type="evidence" value="ECO:0000270"/>
    <property type="project" value="UniProtKB"/>
</dbReference>
<dbReference type="GO" id="GO:0051365">
    <property type="term" value="P:cellular response to potassium ion starvation"/>
    <property type="evidence" value="ECO:0000270"/>
    <property type="project" value="UniProtKB"/>
</dbReference>
<dbReference type="GO" id="GO:0009631">
    <property type="term" value="P:cold acclimation"/>
    <property type="evidence" value="ECO:0000315"/>
    <property type="project" value="UniProtKB"/>
</dbReference>
<dbReference type="GO" id="GO:0009873">
    <property type="term" value="P:ethylene-activated signaling pathway"/>
    <property type="evidence" value="ECO:0007669"/>
    <property type="project" value="UniProtKB-KW"/>
</dbReference>
<dbReference type="GO" id="GO:0019222">
    <property type="term" value="P:regulation of metabolic process"/>
    <property type="evidence" value="ECO:0000315"/>
    <property type="project" value="UniProtKB"/>
</dbReference>
<dbReference type="GO" id="GO:0009409">
    <property type="term" value="P:response to cold"/>
    <property type="evidence" value="ECO:0000270"/>
    <property type="project" value="UniProtKB"/>
</dbReference>
<dbReference type="GO" id="GO:0050826">
    <property type="term" value="P:response to freezing"/>
    <property type="evidence" value="ECO:0000315"/>
    <property type="project" value="UniProtKB"/>
</dbReference>
<dbReference type="FunFam" id="1.20.190.20:FF:000002">
    <property type="entry name" value="14-3-3 protein epsilon"/>
    <property type="match status" value="1"/>
</dbReference>
<dbReference type="Gene3D" id="1.20.190.20">
    <property type="entry name" value="14-3-3 domain"/>
    <property type="match status" value="1"/>
</dbReference>
<dbReference type="InterPro" id="IPR000308">
    <property type="entry name" value="14-3-3"/>
</dbReference>
<dbReference type="InterPro" id="IPR023409">
    <property type="entry name" value="14-3-3_CS"/>
</dbReference>
<dbReference type="InterPro" id="IPR036815">
    <property type="entry name" value="14-3-3_dom_sf"/>
</dbReference>
<dbReference type="InterPro" id="IPR023410">
    <property type="entry name" value="14-3-3_domain"/>
</dbReference>
<dbReference type="PANTHER" id="PTHR18860">
    <property type="entry name" value="14-3-3 PROTEIN"/>
    <property type="match status" value="1"/>
</dbReference>
<dbReference type="Pfam" id="PF00244">
    <property type="entry name" value="14-3-3"/>
    <property type="match status" value="1"/>
</dbReference>
<dbReference type="PIRSF" id="PIRSF000868">
    <property type="entry name" value="14-3-3"/>
    <property type="match status" value="1"/>
</dbReference>
<dbReference type="PRINTS" id="PR00305">
    <property type="entry name" value="1433ZETA"/>
</dbReference>
<dbReference type="SMART" id="SM00101">
    <property type="entry name" value="14_3_3"/>
    <property type="match status" value="1"/>
</dbReference>
<dbReference type="SUPFAM" id="SSF48445">
    <property type="entry name" value="14-3-3 protein"/>
    <property type="match status" value="1"/>
</dbReference>
<dbReference type="PROSITE" id="PS00796">
    <property type="entry name" value="1433_1"/>
    <property type="match status" value="1"/>
</dbReference>
<dbReference type="PROSITE" id="PS00797">
    <property type="entry name" value="1433_2"/>
    <property type="match status" value="1"/>
</dbReference>
<keyword id="KW-0025">Alternative splicing</keyword>
<keyword id="KW-0963">Cytoplasm</keyword>
<keyword id="KW-0936">Ethylene signaling pathway</keyword>
<keyword id="KW-0539">Nucleus</keyword>
<keyword id="KW-0597">Phosphoprotein</keyword>
<keyword id="KW-1185">Reference proteome</keyword>
<keyword id="KW-0346">Stress response</keyword>
<gene>
    <name evidence="13" type="primary">GRF3</name>
    <name evidence="12" type="synonym">RCI1A</name>
    <name evidence="16" type="ordered locus">At5g38480</name>
    <name evidence="17" type="ORF">MXI10.21</name>
</gene>
<feature type="chain" id="PRO_0000058665" description="14-3-3-like protein GF14 psi">
    <location>
        <begin position="1"/>
        <end position="255"/>
    </location>
</feature>
<feature type="modified residue" description="Phosphoserine" evidence="1">
    <location>
        <position position="66"/>
    </location>
</feature>
<feature type="modified residue" description="Phosphothreonine" evidence="19">
    <location>
        <position position="162"/>
    </location>
</feature>
<feature type="modified residue" description="Phosphoserine" evidence="1">
    <location>
        <position position="189"/>
    </location>
</feature>
<feature type="modified residue" description="Phosphothreonine" evidence="1">
    <location>
        <position position="210"/>
    </location>
</feature>
<feature type="modified residue" description="Phosphothreonine" evidence="18">
    <location>
        <position position="238"/>
    </location>
</feature>
<feature type="splice variant" id="VSP_057062" description="In isoform 2." evidence="15">
    <original>DEA</original>
    <variation>VT</variation>
    <location>
        <begin position="239"/>
        <end position="241"/>
    </location>
</feature>
<feature type="sequence conflict" description="In Ref. 1; AAA32799 and 3; AAA96252." evidence="15" ref="1 3">
    <original>K</original>
    <variation>E</variation>
    <location>
        <position position="90"/>
    </location>
</feature>
<proteinExistence type="evidence at protein level"/>
<protein>
    <recommendedName>
        <fullName evidence="14">14-3-3-like protein GF14 psi</fullName>
    </recommendedName>
    <alternativeName>
        <fullName evidence="13">General regulatory factor 3</fullName>
    </alternativeName>
    <alternativeName>
        <fullName evidence="12">Protein RARE COLD INDUCIBLE 1A</fullName>
    </alternativeName>
</protein>
<comment type="function">
    <text evidence="2 4 5 6 7 13 14">Is associated with a DNA binding complex that binds to the G box, a well-characterized cis-acting DNA regulatory element found in plant genes (PubMed:16407442, PubMed:7870824, PubMed:7972511). Involved in the regulation of nutrient metabolism (PubMed:21094157, PubMed:22104211). Reciprocal negative transcription regulation of miR396 (PubMed:22751317). Negative regulator of constitutive freezing tolerance and cold acclimation by controlling cold-induced gene expression partially through an ethylene (ET)-dependent pathway; prevents ethylene (ET) biosynthesis, probably by binding 1-aminocyclopropane-1-carboxylate synthases (ACS) to reduce their stability, thus contributing to establish adequate ET levels under both standard and low-temperature conditions (PubMed:25122152).</text>
</comment>
<comment type="subunit">
    <text evidence="2 4 5 7 8 9 10">Component of a DNA binding complex that binds to the G box (PubMed:16407442). Interacts with IDH3, AGT3, GLN1-1, GLN1-2, GLN1-4, SAM1, SAM2, MDH1, METK3 and MDH2 (PubMed:21094157, PubMed:22104211). Binds to 1-aminocyclopropane-1-carboxylate synthases (ACS) such as ACS2, ACS5, ACS6, ACS8, and ACS11 (PubMed:25122152). Interacts with FD (PubMed:25661797). Interacts with DREB1A and DREB1B in the nucleus (PubMed:28344081). Interacts with CINV1 (PubMed:25256212).</text>
</comment>
<comment type="subcellular location">
    <subcellularLocation>
        <location evidence="7">Cytoplasm</location>
    </subcellularLocation>
    <subcellularLocation>
        <location evidence="7">Nucleus</location>
    </subcellularLocation>
    <text evidence="1">Translocates from the cytosol to the nucleus when phosphorylated.</text>
</comment>
<comment type="alternative products">
    <event type="alternative splicing"/>
    <isoform>
        <id>P42644-1</id>
        <name>1</name>
        <sequence type="displayed"/>
    </isoform>
    <isoform>
        <id>P42644-2</id>
        <name>2</name>
        <sequence type="described" ref="VSP_057062"/>
    </isoform>
</comment>
<comment type="induction">
    <text evidence="3 4 6 7 11">By cold in an abscisic acid- (ABA-) independent manner (at protein level) (PubMed:25122152, PubMed:7520301). Repressed by phosphate (Pi) deprivation (PubMed:17598127). Induced by nitrogen (N) and phosphate (P) deprivation in leaves, but repressed by potassium (K) and N deprivation in roots (PubMed:21094157). Repressed by miR396 (PubMed:22751317).</text>
</comment>
<comment type="disruption phenotype">
    <text evidence="4 5 6 7">Short primary roots and reduced size, with smaller cells (PubMed:21094157, PubMed:25122152). Disturbed levels of several metabolites (e.g. beta-alanine, threonic acid, phenylalanine, 1,3-diaminopropane dihydrochloride, citrate, glycine, aspartate, glucose, 1,4-diaminobutane, proline, palmitate and shikimate) (PubMed:22104211). Increased miR396 levels in plants lacking simultaneously GRF1, GRF2 and GRF3 (PubMed:22751317). Higher freezing tolerance, and greater levels of cold-inducible genes and ethylene- (ET-) inducible genes leading to higher ET levels, as well as slightly enhanced expression of ACS6 (PubMed:25122152).</text>
</comment>
<comment type="similarity">
    <text evidence="15">Belongs to the 14-3-3 family.</text>
</comment>
<evidence type="ECO:0000250" key="1">
    <source>
        <dbReference type="UniProtKB" id="P48349"/>
    </source>
</evidence>
<evidence type="ECO:0000269" key="2">
    <source>
    </source>
</evidence>
<evidence type="ECO:0000269" key="3">
    <source>
    </source>
</evidence>
<evidence type="ECO:0000269" key="4">
    <source>
    </source>
</evidence>
<evidence type="ECO:0000269" key="5">
    <source>
    </source>
</evidence>
<evidence type="ECO:0000269" key="6">
    <source>
    </source>
</evidence>
<evidence type="ECO:0000269" key="7">
    <source>
    </source>
</evidence>
<evidence type="ECO:0000269" key="8">
    <source>
    </source>
</evidence>
<evidence type="ECO:0000269" key="9">
    <source>
    </source>
</evidence>
<evidence type="ECO:0000269" key="10">
    <source>
    </source>
</evidence>
<evidence type="ECO:0000269" key="11">
    <source>
    </source>
</evidence>
<evidence type="ECO:0000303" key="12">
    <source>
    </source>
</evidence>
<evidence type="ECO:0000303" key="13">
    <source>
    </source>
</evidence>
<evidence type="ECO:0000303" key="14">
    <source>
    </source>
</evidence>
<evidence type="ECO:0000305" key="15"/>
<evidence type="ECO:0000312" key="16">
    <source>
        <dbReference type="Araport" id="AT5G38480"/>
    </source>
</evidence>
<evidence type="ECO:0000312" key="17">
    <source>
        <dbReference type="EMBL" id="BAB10138.1"/>
    </source>
</evidence>
<evidence type="ECO:0007744" key="18">
    <source>
    </source>
</evidence>
<evidence type="ECO:0007744" key="19">
    <source>
    </source>
</evidence>
<sequence>MSTREENVYMAKLAEQAERYEEMVEFMEKVAKTVDVEELSVEERNLLSVAYKNVIGARRASWRIISSIEQKEESKGNEDHVAIIKDYRGKIESELSKICDGILNVLEAHLIPSASPAESKVFYLKMKGDYHRYLAEFKAGAERKEAAESTLVAYKSASDIATAELAPTHPIRLGLALNFSVFYYEILNSPDRACSLAKQAFDDAIAELDTLGEESYKDSTLIMQLLRDNLTLWTSDMTDEAGDEIKEASKPDGAE</sequence>
<organism>
    <name type="scientific">Arabidopsis thaliana</name>
    <name type="common">Mouse-ear cress</name>
    <dbReference type="NCBI Taxonomy" id="3702"/>
    <lineage>
        <taxon>Eukaryota</taxon>
        <taxon>Viridiplantae</taxon>
        <taxon>Streptophyta</taxon>
        <taxon>Embryophyta</taxon>
        <taxon>Tracheophyta</taxon>
        <taxon>Spermatophyta</taxon>
        <taxon>Magnoliopsida</taxon>
        <taxon>eudicotyledons</taxon>
        <taxon>Gunneridae</taxon>
        <taxon>Pentapetalae</taxon>
        <taxon>rosids</taxon>
        <taxon>malvids</taxon>
        <taxon>Brassicales</taxon>
        <taxon>Brassicaceae</taxon>
        <taxon>Camelineae</taxon>
        <taxon>Arabidopsis</taxon>
    </lineage>
</organism>
<reference key="1">
    <citation type="journal article" date="1994" name="Plant Physiol.">
        <title>Five cDNAs encoding Arabidopsis GF14 proteins.</title>
        <authorList>
            <person name="Lu G."/>
            <person name="Rooney M.F."/>
            <person name="Wu K."/>
            <person name="Ferl R.J."/>
        </authorList>
    </citation>
    <scope>NUCLEOTIDE SEQUENCE [MRNA] (ISOFORM 1)</scope>
    <scope>FUNCTION</scope>
    <source>
        <strain>cv. Columbia</strain>
    </source>
</reference>
<reference key="2">
    <citation type="journal article" date="1994" name="Plant Mol. Biol.">
        <title>Two related low-temperature-inducible genes of Arabidopsis encode proteins showing high homology to 14-3-3 proteins, a family of putative kinase regulators.</title>
        <authorList>
            <person name="Jarillo J.A."/>
            <person name="Capel J."/>
            <person name="Leyva A."/>
            <person name="Martinez Zapater J.M."/>
            <person name="Salinas J."/>
        </authorList>
    </citation>
    <scope>NUCLEOTIDE SEQUENCE [MRNA] (ISOFORM 1)</scope>
    <scope>INDUCTION BY COLD</scope>
</reference>
<reference key="3">
    <citation type="journal article" date="1995" name="Plant Physiol.">
        <title>Sequences of three Arabidopsis general regulatory factor genes encoding GF14 (14-3-3) proteins.</title>
        <authorList>
            <person name="Rooney M.F."/>
            <person name="Ferl R.J."/>
        </authorList>
    </citation>
    <scope>NUCLEOTIDE SEQUENCE [GENOMIC DNA]</scope>
    <scope>FUNCTION</scope>
    <source>
        <strain>cv. Columbia</strain>
    </source>
</reference>
<reference key="4">
    <citation type="journal article" date="1997" name="DNA Res.">
        <title>Structural analysis of Arabidopsis thaliana chromosome 5. I. Sequence features of the 1.6 Mb regions covered by twenty physically assigned P1 clones.</title>
        <authorList>
            <person name="Sato S."/>
            <person name="Kotani H."/>
            <person name="Nakamura Y."/>
            <person name="Kaneko T."/>
            <person name="Asamizu E."/>
            <person name="Fukami M."/>
            <person name="Miyajima N."/>
            <person name="Tabata S."/>
        </authorList>
    </citation>
    <scope>NUCLEOTIDE SEQUENCE [LARGE SCALE GENOMIC DNA]</scope>
    <source>
        <strain>cv. Columbia</strain>
    </source>
</reference>
<reference key="5">
    <citation type="journal article" date="2017" name="Plant J.">
        <title>Araport11: a complete reannotation of the Arabidopsis thaliana reference genome.</title>
        <authorList>
            <person name="Cheng C.Y."/>
            <person name="Krishnakumar V."/>
            <person name="Chan A.P."/>
            <person name="Thibaud-Nissen F."/>
            <person name="Schobel S."/>
            <person name="Town C.D."/>
        </authorList>
    </citation>
    <scope>GENOME REANNOTATION</scope>
    <source>
        <strain>cv. Columbia</strain>
    </source>
</reference>
<reference key="6">
    <citation type="journal article" date="2003" name="Science">
        <title>Empirical analysis of transcriptional activity in the Arabidopsis genome.</title>
        <authorList>
            <person name="Yamada K."/>
            <person name="Lim J."/>
            <person name="Dale J.M."/>
            <person name="Chen H."/>
            <person name="Shinn P."/>
            <person name="Palm C.J."/>
            <person name="Southwick A.M."/>
            <person name="Wu H.C."/>
            <person name="Kim C.J."/>
            <person name="Nguyen M."/>
            <person name="Pham P.K."/>
            <person name="Cheuk R.F."/>
            <person name="Karlin-Newmann G."/>
            <person name="Liu S.X."/>
            <person name="Lam B."/>
            <person name="Sakano H."/>
            <person name="Wu T."/>
            <person name="Yu G."/>
            <person name="Miranda M."/>
            <person name="Quach H.L."/>
            <person name="Tripp M."/>
            <person name="Chang C.H."/>
            <person name="Lee J.M."/>
            <person name="Toriumi M.J."/>
            <person name="Chan M.M."/>
            <person name="Tang C.C."/>
            <person name="Onodera C.S."/>
            <person name="Deng J.M."/>
            <person name="Akiyama K."/>
            <person name="Ansari Y."/>
            <person name="Arakawa T."/>
            <person name="Banh J."/>
            <person name="Banno F."/>
            <person name="Bowser L."/>
            <person name="Brooks S.Y."/>
            <person name="Carninci P."/>
            <person name="Chao Q."/>
            <person name="Choy N."/>
            <person name="Enju A."/>
            <person name="Goldsmith A.D."/>
            <person name="Gurjal M."/>
            <person name="Hansen N.F."/>
            <person name="Hayashizaki Y."/>
            <person name="Johnson-Hopson C."/>
            <person name="Hsuan V.W."/>
            <person name="Iida K."/>
            <person name="Karnes M."/>
            <person name="Khan S."/>
            <person name="Koesema E."/>
            <person name="Ishida J."/>
            <person name="Jiang P.X."/>
            <person name="Jones T."/>
            <person name="Kawai J."/>
            <person name="Kamiya A."/>
            <person name="Meyers C."/>
            <person name="Nakajima M."/>
            <person name="Narusaka M."/>
            <person name="Seki M."/>
            <person name="Sakurai T."/>
            <person name="Satou M."/>
            <person name="Tamse R."/>
            <person name="Vaysberg M."/>
            <person name="Wallender E.K."/>
            <person name="Wong C."/>
            <person name="Yamamura Y."/>
            <person name="Yuan S."/>
            <person name="Shinozaki K."/>
            <person name="Davis R.W."/>
            <person name="Theologis A."/>
            <person name="Ecker J.R."/>
        </authorList>
    </citation>
    <scope>NUCLEOTIDE SEQUENCE [LARGE SCALE MRNA] (ISOFORM 1)</scope>
    <source>
        <strain>cv. Columbia</strain>
    </source>
</reference>
<reference key="7">
    <citation type="submission" date="2006-07" db="EMBL/GenBank/DDBJ databases">
        <title>Large-scale analysis of RIKEN Arabidopsis full-length (RAFL) cDNAs.</title>
        <authorList>
            <person name="Totoki Y."/>
            <person name="Seki M."/>
            <person name="Ishida J."/>
            <person name="Nakajima M."/>
            <person name="Enju A."/>
            <person name="Kamiya A."/>
            <person name="Narusaka M."/>
            <person name="Shin-i T."/>
            <person name="Nakagawa M."/>
            <person name="Sakamoto N."/>
            <person name="Oishi K."/>
            <person name="Kohara Y."/>
            <person name="Kobayashi M."/>
            <person name="Toyoda A."/>
            <person name="Sakaki Y."/>
            <person name="Sakurai T."/>
            <person name="Iida K."/>
            <person name="Akiyama K."/>
            <person name="Satou M."/>
            <person name="Toyoda T."/>
            <person name="Konagaya A."/>
            <person name="Carninci P."/>
            <person name="Kawai J."/>
            <person name="Hayashizaki Y."/>
            <person name="Shinozaki K."/>
        </authorList>
    </citation>
    <scope>NUCLEOTIDE SEQUENCE [LARGE SCALE MRNA] (ISOFORM 1)</scope>
    <source>
        <strain>cv. Columbia</strain>
    </source>
</reference>
<reference key="8">
    <citation type="journal article" date="2001" name="Plant Physiol.">
        <title>The arabidopsis 14-3-3 family of signaling regulators.</title>
        <authorList>
            <person name="DeLille J.M."/>
            <person name="Sehnke P.C."/>
            <person name="Ferl R.J."/>
        </authorList>
    </citation>
    <scope>GENE FAMILY</scope>
</reference>
<reference key="9">
    <citation type="journal article" date="2006" name="Plant Physiol.">
        <title>Exposed loop domains of complexed 14-3-3 proteins contribute to structural diversity and functional specificity.</title>
        <authorList>
            <person name="Sehnke P.C."/>
            <person name="Laughner B."/>
            <person name="Cardasis H."/>
            <person name="Powell D."/>
            <person name="Ferl R.J."/>
        </authorList>
    </citation>
    <scope>FUNCTION</scope>
    <scope>SUBUNIT</scope>
</reference>
<reference key="10">
    <citation type="journal article" date="2007" name="Planta">
        <title>Phosphate differentially regulates 14-3-3 family members and GRF9 plays a role in Pi-starvation induced responses.</title>
        <authorList>
            <person name="Cao A."/>
            <person name="Jain A."/>
            <person name="Baldwin J.C."/>
            <person name="Raghothama K.G."/>
        </authorList>
    </citation>
    <scope>REGULATION BY PHOSPHATE DEPRIVATION</scope>
</reference>
<reference key="11">
    <citation type="journal article" date="2009" name="Plant Physiol.">
        <title>Large-scale Arabidopsis phosphoproteome profiling reveals novel chloroplast kinase substrates and phosphorylation networks.</title>
        <authorList>
            <person name="Reiland S."/>
            <person name="Messerli G."/>
            <person name="Baerenfaller K."/>
            <person name="Gerrits B."/>
            <person name="Endler A."/>
            <person name="Grossmann J."/>
            <person name="Gruissem W."/>
            <person name="Baginsky S."/>
        </authorList>
    </citation>
    <scope>PHOSPHORYLATION [LARGE SCALE ANALYSIS] AT THR-238</scope>
    <scope>IDENTIFICATION BY MASS SPECTROMETRY [LARGE SCALE ANALYSIS]</scope>
</reference>
<reference key="12">
    <citation type="journal article" date="2011" name="BMC Syst. Biol.">
        <title>Determining novel functions of Arabidopsis 14-3-3 proteins in central metabolic processes.</title>
        <authorList>
            <person name="Diaz C."/>
            <person name="Kusano M."/>
            <person name="Sulpice R."/>
            <person name="Araki M."/>
            <person name="Redestig H."/>
            <person name="Saito K."/>
            <person name="Stitt M."/>
            <person name="Shin R."/>
        </authorList>
    </citation>
    <scope>FUNCTION</scope>
    <scope>DISRUPTION PHENOTYPE</scope>
    <scope>INTERACTION WITH IDH3; MDH1 AND MDH2</scope>
</reference>
<reference key="13">
    <citation type="journal article" date="2011" name="FEBS Lett.">
        <title>14-3-3 proteins fine-tune plant nutrient metabolism.</title>
        <authorList>
            <person name="Shin R."/>
            <person name="Jez J.M."/>
            <person name="Basra A."/>
            <person name="Zhang B."/>
            <person name="Schachtman D.P."/>
        </authorList>
    </citation>
    <scope>FUNCTION</scope>
    <scope>DISRUPTION PHENOTYPE</scope>
    <scope>INDUCTION BY DEPRIVATION OF PHOSPHATE; POTASSIUM AND NITROGEN</scope>
    <scope>INTERACTION WITH AGT3; GLN1-1; GLN1-2; GLN1-4; SAM1; SAM2 AND METK3</scope>
</reference>
<reference key="14">
    <citation type="journal article" date="2012" name="J. Proteome Res.">
        <title>Identification of phosphoproteins in Arabidopsis thaliana leaves using polyethylene glycol fractionation, immobilized metal-ion affinity chromatography, two-dimensional gel electrophoresis and mass spectrometry.</title>
        <authorList>
            <person name="Aryal U.K."/>
            <person name="Krochko J.E."/>
            <person name="Ross A.R."/>
        </authorList>
    </citation>
    <scope>PHOSPHORYLATION [LARGE SCALE ANALYSIS] AT THR-162</scope>
    <scope>IDENTIFICATION BY MASS SPECTROMETRY [LARGE SCALE ANALYSIS]</scope>
</reference>
<reference key="15">
    <citation type="journal article" date="2012" name="Plant Signal. Behav.">
        <title>Complex feedback regulations govern the expression of miRNA396 and its GRF target genes.</title>
        <authorList>
            <person name="Hewezi T."/>
            <person name="Baum T.J."/>
        </authorList>
    </citation>
    <scope>FUNCTION</scope>
    <scope>DISRUPTION PHENOTYPE</scope>
    <scope>REGULATION BY MIR396</scope>
</reference>
<reference key="16">
    <citation type="journal article" date="2014" name="Plant Cell">
        <title>The Arabidopsis 14-3-3 protein RARE COLD INDUCIBLE 1A links low-temperature response and ethylene biosynthesis to regulate freezing tolerance and cold acclimation.</title>
        <authorList>
            <person name="Catala R."/>
            <person name="Lopez-Cobollo R."/>
            <person name="Mar Castellano M."/>
            <person name="Angosto T."/>
            <person name="Alonso J.M."/>
            <person name="Ecker J.R."/>
            <person name="Salinas J."/>
        </authorList>
    </citation>
    <scope>FUNCTION</scope>
    <scope>DISRUPTION PHENOTYPE</scope>
    <scope>INDUCTION BY COLD</scope>
    <scope>SUBCELLULAR LOCATION</scope>
    <scope>INTERACTION WITH ACS2; ACS5; ACS6; ACS8 AND ACS11</scope>
</reference>
<reference key="17">
    <citation type="journal article" date="2014" name="Plant J.">
        <title>Light modulated activity of root alkaline/neutral invertase involves the interaction with 14-3-3 proteins.</title>
        <authorList>
            <person name="Gao J."/>
            <person name="van Kleeff P.J."/>
            <person name="Oecking C."/>
            <person name="Li K.W."/>
            <person name="Erban A."/>
            <person name="Kopka J."/>
            <person name="Hincha D.K."/>
            <person name="de Boer A.H."/>
        </authorList>
    </citation>
    <scope>INTERACTION WITH CINV1</scope>
</reference>
<reference key="18">
    <citation type="journal article" date="2015" name="Sci. Rep.">
        <title>Calcium-dependent protein kinases responsible for the phosphorylation of a bZIP transcription factor FD crucial for the florigen complex formation.</title>
        <authorList>
            <person name="Kawamoto N."/>
            <person name="Sasabe M."/>
            <person name="Endo M."/>
            <person name="Machida Y."/>
            <person name="Araki T."/>
        </authorList>
    </citation>
    <scope>INTERACTION WITH FD</scope>
</reference>
<reference key="19">
    <citation type="journal article" date="2017" name="Mol. Cell">
        <title>Plasma membrane CRPK1-mediated phosphorylation of 14-3-3 proteins induces their nuclear import to fine-tune CBF signaling during cold response.</title>
        <authorList>
            <person name="Liu Z."/>
            <person name="Jia Y."/>
            <person name="Ding Y."/>
            <person name="Shi Y."/>
            <person name="Li Z."/>
            <person name="Guo Y."/>
            <person name="Gong Z."/>
            <person name="Yang S."/>
        </authorList>
    </citation>
    <scope>INTERACTION WITH DREB1A AND DREB1B</scope>
    <source>
        <strain>cv. Columbia</strain>
    </source>
</reference>